<accession>B7J6A7</accession>
<protein>
    <recommendedName>
        <fullName evidence="1">Small ribosomal subunit protein bS21</fullName>
    </recommendedName>
    <alternativeName>
        <fullName evidence="2">30S ribosomal protein S21</fullName>
    </alternativeName>
</protein>
<comment type="similarity">
    <text evidence="1">Belongs to the bacterial ribosomal protein bS21 family.</text>
</comment>
<organism>
    <name type="scientific">Acidithiobacillus ferrooxidans (strain ATCC 23270 / DSM 14882 / CIP 104768 / NCIMB 8455)</name>
    <name type="common">Ferrobacillus ferrooxidans (strain ATCC 23270)</name>
    <dbReference type="NCBI Taxonomy" id="243159"/>
    <lineage>
        <taxon>Bacteria</taxon>
        <taxon>Pseudomonadati</taxon>
        <taxon>Pseudomonadota</taxon>
        <taxon>Acidithiobacillia</taxon>
        <taxon>Acidithiobacillales</taxon>
        <taxon>Acidithiobacillaceae</taxon>
        <taxon>Acidithiobacillus</taxon>
    </lineage>
</organism>
<name>RS21_ACIF2</name>
<keyword id="KW-1185">Reference proteome</keyword>
<keyword id="KW-0687">Ribonucleoprotein</keyword>
<keyword id="KW-0689">Ribosomal protein</keyword>
<reference key="1">
    <citation type="journal article" date="2008" name="BMC Genomics">
        <title>Acidithiobacillus ferrooxidans metabolism: from genome sequence to industrial applications.</title>
        <authorList>
            <person name="Valdes J."/>
            <person name="Pedroso I."/>
            <person name="Quatrini R."/>
            <person name="Dodson R.J."/>
            <person name="Tettelin H."/>
            <person name="Blake R. II"/>
            <person name="Eisen J.A."/>
            <person name="Holmes D.S."/>
        </authorList>
    </citation>
    <scope>NUCLEOTIDE SEQUENCE [LARGE SCALE GENOMIC DNA]</scope>
    <source>
        <strain>ATCC 23270 / DSM 14882 / CIP 104768 / NCIMB 8455</strain>
    </source>
</reference>
<feature type="chain" id="PRO_1000120575" description="Small ribosomal subunit protein bS21">
    <location>
        <begin position="1"/>
        <end position="71"/>
    </location>
</feature>
<gene>
    <name evidence="1" type="primary">rpsU</name>
    <name type="ordered locus">AFE_2340</name>
</gene>
<proteinExistence type="inferred from homology"/>
<dbReference type="EMBL" id="CP001219">
    <property type="protein sequence ID" value="ACK80850.1"/>
    <property type="molecule type" value="Genomic_DNA"/>
</dbReference>
<dbReference type="RefSeq" id="WP_009564692.1">
    <property type="nucleotide sequence ID" value="NC_011761.1"/>
</dbReference>
<dbReference type="SMR" id="B7J6A7"/>
<dbReference type="STRING" id="243159.AFE_2340"/>
<dbReference type="PaxDb" id="243159-AFE_2340"/>
<dbReference type="GeneID" id="65281433"/>
<dbReference type="KEGG" id="afr:AFE_2340"/>
<dbReference type="eggNOG" id="COG0828">
    <property type="taxonomic scope" value="Bacteria"/>
</dbReference>
<dbReference type="HOGENOM" id="CLU_159258_1_2_6"/>
<dbReference type="Proteomes" id="UP000001362">
    <property type="component" value="Chromosome"/>
</dbReference>
<dbReference type="GO" id="GO:1990904">
    <property type="term" value="C:ribonucleoprotein complex"/>
    <property type="evidence" value="ECO:0007669"/>
    <property type="project" value="UniProtKB-KW"/>
</dbReference>
<dbReference type="GO" id="GO:0005840">
    <property type="term" value="C:ribosome"/>
    <property type="evidence" value="ECO:0007669"/>
    <property type="project" value="UniProtKB-KW"/>
</dbReference>
<dbReference type="GO" id="GO:0003735">
    <property type="term" value="F:structural constituent of ribosome"/>
    <property type="evidence" value="ECO:0007669"/>
    <property type="project" value="InterPro"/>
</dbReference>
<dbReference type="GO" id="GO:0006412">
    <property type="term" value="P:translation"/>
    <property type="evidence" value="ECO:0007669"/>
    <property type="project" value="UniProtKB-UniRule"/>
</dbReference>
<dbReference type="Gene3D" id="1.20.5.1150">
    <property type="entry name" value="Ribosomal protein S8"/>
    <property type="match status" value="1"/>
</dbReference>
<dbReference type="HAMAP" id="MF_00358">
    <property type="entry name" value="Ribosomal_bS21"/>
    <property type="match status" value="1"/>
</dbReference>
<dbReference type="InterPro" id="IPR001911">
    <property type="entry name" value="Ribosomal_bS21"/>
</dbReference>
<dbReference type="InterPro" id="IPR018278">
    <property type="entry name" value="Ribosomal_bS21_CS"/>
</dbReference>
<dbReference type="InterPro" id="IPR038380">
    <property type="entry name" value="Ribosomal_bS21_sf"/>
</dbReference>
<dbReference type="NCBIfam" id="TIGR00030">
    <property type="entry name" value="S21p"/>
    <property type="match status" value="1"/>
</dbReference>
<dbReference type="PANTHER" id="PTHR21109">
    <property type="entry name" value="MITOCHONDRIAL 28S RIBOSOMAL PROTEIN S21"/>
    <property type="match status" value="1"/>
</dbReference>
<dbReference type="PANTHER" id="PTHR21109:SF22">
    <property type="entry name" value="SMALL RIBOSOMAL SUBUNIT PROTEIN BS21"/>
    <property type="match status" value="1"/>
</dbReference>
<dbReference type="Pfam" id="PF01165">
    <property type="entry name" value="Ribosomal_S21"/>
    <property type="match status" value="1"/>
</dbReference>
<dbReference type="PRINTS" id="PR00976">
    <property type="entry name" value="RIBOSOMALS21"/>
</dbReference>
<dbReference type="PROSITE" id="PS01181">
    <property type="entry name" value="RIBOSOMAL_S21"/>
    <property type="match status" value="1"/>
</dbReference>
<evidence type="ECO:0000255" key="1">
    <source>
        <dbReference type="HAMAP-Rule" id="MF_00358"/>
    </source>
</evidence>
<evidence type="ECO:0000305" key="2"/>
<sequence>MPTVRVKENEPFEVALRRFKRSCEKAGVLTEVRRREFYEKPTEERKRKAAAARKRALKRMRRQSMRLVRLY</sequence>